<proteinExistence type="inferred from homology"/>
<comment type="function">
    <text evidence="1">May be involved in vacuolar sorting and osmoregulation.</text>
</comment>
<comment type="cofactor">
    <cofactor evidence="2">
        <name>Zn(2+)</name>
        <dbReference type="ChEBI" id="CHEBI:29105"/>
    </cofactor>
    <text evidence="2">Binds 2 Zn(2+) ions per subunit.</text>
</comment>
<comment type="subcellular location">
    <subcellularLocation>
        <location evidence="1">Vacuole membrane</location>
        <topology evidence="3">Multi-pass membrane protein</topology>
    </subcellularLocation>
</comment>
<comment type="similarity">
    <text evidence="6">Belongs to the peptidase M28 family.</text>
</comment>
<gene>
    <name type="ORF">BDCG_00606</name>
</gene>
<reference key="1">
    <citation type="journal article" date="2015" name="PLoS Genet.">
        <title>The dynamic genome and transcriptome of the human fungal pathogen Blastomyces and close relative Emmonsia.</title>
        <authorList>
            <person name="Munoz J.F."/>
            <person name="Gauthier G.M."/>
            <person name="Desjardins C.A."/>
            <person name="Gallo J.E."/>
            <person name="Holder J."/>
            <person name="Sullivan T.D."/>
            <person name="Marty A.J."/>
            <person name="Carmen J.C."/>
            <person name="Chen Z."/>
            <person name="Ding L."/>
            <person name="Gujja S."/>
            <person name="Magrini V."/>
            <person name="Misas E."/>
            <person name="Mitreva M."/>
            <person name="Priest M."/>
            <person name="Saif S."/>
            <person name="Whiston E.A."/>
            <person name="Young S."/>
            <person name="Zeng Q."/>
            <person name="Goldman W.E."/>
            <person name="Mardis E.R."/>
            <person name="Taylor J.W."/>
            <person name="McEwen J.G."/>
            <person name="Clay O.K."/>
            <person name="Klein B.S."/>
            <person name="Cuomo C.A."/>
        </authorList>
    </citation>
    <scope>NUCLEOTIDE SEQUENCE [LARGE SCALE GENOMIC DNA]</scope>
    <source>
        <strain>ER-3 / ATCC MYA-2586</strain>
    </source>
</reference>
<organism>
    <name type="scientific">Ajellomyces dermatitidis (strain ER-3 / ATCC MYA-2586)</name>
    <name type="common">Blastomyces dermatitidis</name>
    <dbReference type="NCBI Taxonomy" id="559297"/>
    <lineage>
        <taxon>Eukaryota</taxon>
        <taxon>Fungi</taxon>
        <taxon>Dikarya</taxon>
        <taxon>Ascomycota</taxon>
        <taxon>Pezizomycotina</taxon>
        <taxon>Eurotiomycetes</taxon>
        <taxon>Eurotiomycetidae</taxon>
        <taxon>Onygenales</taxon>
        <taxon>Ajellomycetaceae</taxon>
        <taxon>Blastomyces</taxon>
    </lineage>
</organism>
<sequence length="986" mass="108896">MATPRAQKFNPIAFTPGPVTLITTIVYLALLIPILVISLVVPPAPETSPEGVNLTEAWRDLQHLTGGFHPYNSRRNDDVHQWLLRRIDSILRPTVEAGERPSANNDIPDVFVFDDNQSNLTYSNGGVGKAAIVGVYFEGTNIIVYIRGTEDDPENWWERSNGKPKGKGGVLVNAHYDSVSTGYGATDNGMGVVSLLQLLKYFTTPGNKPRKGLVLLFNNGEEDYLNGAHVFSQHPLSNFTHTFLNLEGAGAGGRAALFRTTDTEVTRFYQNAKHPFGSVLAADGFKMGLLRSQTDYVVFNGILGLRGLDLAFIAPRSRYHTDQDDARHTSVDSLWHMLSAAIGTTEGLVSYTGTDFDGKSQGLDKVNSGTGTLGVWFDMFGSAFAVFRLHTLFALSVTLLIVAPLVIFITAIVLSKTDRMYLFSMSKSLGGTDERVSLRGLRGLFRTPIILAVATVIPIGLAYLLEKVNPYIVHSSQFSVWSMMISVWIFLAWFLACAADFFRPSALHRAYSYTWIFIATWVMLVINTVYANQKGIAAGYFVFFYFSGSFLATWVSYLELFALPRKGDFARQAIMHSGRPPSSLRSRLLTPSADELPSDTGPHAEYPGDADETDPTESTSLLRGQRTTFANYRTGGTDGVVEGTDEGPSFKHEQSWSWTLPRWTWVLQLLLLAPIVLILVGQLALFLTTSMSQVGSDGVSTFIVYLACAVFTTLLFAPLFPFIHRFTYHIPTFLFLVFVGTLIYNLVAFPFSPANRLKMFFIQEVNLDDGSNTVSLSGIQPYLTDAINSIPSAAGQNITCDQSAFGKLEKCSWAGLPPRVLGQDHDRDTGIVSSDWMSYNITKTVGENKARIEISGRNTRACKLKFDKPVADFQVSGSAVDHRMPHTSGQGVAEIRLWSRTWDRTWVVDICWHDSHDKPEDDDGDDEKQDAPRNGLSGKVICLWSDSNQSDVIPALDELRLYTPNWVAISKSADGLVEASHGITIQ</sequence>
<protein>
    <recommendedName>
        <fullName evidence="1">Vacuolar membrane protease</fullName>
        <ecNumber evidence="6">3.4.-.-</ecNumber>
    </recommendedName>
    <alternativeName>
        <fullName evidence="1">FXNA-related family protease 1</fullName>
    </alternativeName>
</protein>
<accession>C5G8H4</accession>
<feature type="chain" id="PRO_0000411692" description="Vacuolar membrane protease">
    <location>
        <begin position="1"/>
        <end position="986"/>
    </location>
</feature>
<feature type="topological domain" description="Cytoplasmic" evidence="1">
    <location>
        <begin position="1"/>
        <end position="20"/>
    </location>
</feature>
<feature type="transmembrane region" description="Helical; Name=1" evidence="3">
    <location>
        <begin position="21"/>
        <end position="41"/>
    </location>
</feature>
<feature type="topological domain" description="Vacuolar" evidence="1">
    <location>
        <begin position="42"/>
        <end position="392"/>
    </location>
</feature>
<feature type="transmembrane region" description="Helical; Name=2" evidence="3">
    <location>
        <begin position="393"/>
        <end position="413"/>
    </location>
</feature>
<feature type="topological domain" description="Cytoplasmic" evidence="1">
    <location>
        <begin position="414"/>
        <end position="447"/>
    </location>
</feature>
<feature type="transmembrane region" description="Helical; Name=3" evidence="3">
    <location>
        <begin position="448"/>
        <end position="468"/>
    </location>
</feature>
<feature type="topological domain" description="Vacuolar" evidence="1">
    <location>
        <begin position="469"/>
        <end position="477"/>
    </location>
</feature>
<feature type="transmembrane region" description="Helical; Name=4" evidence="3">
    <location>
        <begin position="478"/>
        <end position="498"/>
    </location>
</feature>
<feature type="topological domain" description="Cytoplasmic" evidence="1">
    <location>
        <begin position="499"/>
        <end position="509"/>
    </location>
</feature>
<feature type="transmembrane region" description="Helical; Name=5" evidence="3">
    <location>
        <begin position="510"/>
        <end position="530"/>
    </location>
</feature>
<feature type="topological domain" description="Vacuolar" evidence="1">
    <location>
        <begin position="531"/>
        <end position="534"/>
    </location>
</feature>
<feature type="transmembrane region" description="Helical; Name=6" evidence="3">
    <location>
        <begin position="535"/>
        <end position="555"/>
    </location>
</feature>
<feature type="topological domain" description="Cytoplasmic" evidence="1">
    <location>
        <begin position="556"/>
        <end position="665"/>
    </location>
</feature>
<feature type="transmembrane region" description="Helical; Name=7" evidence="3">
    <location>
        <begin position="666"/>
        <end position="686"/>
    </location>
</feature>
<feature type="topological domain" description="Vacuolar" evidence="1">
    <location>
        <begin position="687"/>
        <end position="702"/>
    </location>
</feature>
<feature type="transmembrane region" description="Helical; Name=8" evidence="3">
    <location>
        <begin position="703"/>
        <end position="723"/>
    </location>
</feature>
<feature type="topological domain" description="Cytoplasmic" evidence="1">
    <location>
        <begin position="724"/>
        <end position="729"/>
    </location>
</feature>
<feature type="transmembrane region" description="Helical; Name=9" evidence="3">
    <location>
        <begin position="730"/>
        <end position="750"/>
    </location>
</feature>
<feature type="topological domain" description="Vacuolar" evidence="1">
    <location>
        <begin position="751"/>
        <end position="986"/>
    </location>
</feature>
<feature type="region of interest" description="Disordered" evidence="5">
    <location>
        <begin position="595"/>
        <end position="620"/>
    </location>
</feature>
<feature type="active site" description="Proton acceptor" evidence="2">
    <location>
        <position position="221"/>
    </location>
</feature>
<feature type="binding site" evidence="2">
    <location>
        <position position="175"/>
    </location>
    <ligand>
        <name>Zn(2+)</name>
        <dbReference type="ChEBI" id="CHEBI:29105"/>
        <label>1</label>
        <note>catalytic</note>
    </ligand>
</feature>
<feature type="binding site" evidence="2">
    <location>
        <position position="187"/>
    </location>
    <ligand>
        <name>Zn(2+)</name>
        <dbReference type="ChEBI" id="CHEBI:29105"/>
        <label>1</label>
        <note>catalytic</note>
    </ligand>
</feature>
<feature type="binding site" evidence="2">
    <location>
        <position position="187"/>
    </location>
    <ligand>
        <name>Zn(2+)</name>
        <dbReference type="ChEBI" id="CHEBI:29105"/>
        <label>2</label>
        <note>catalytic</note>
    </ligand>
</feature>
<feature type="binding site" evidence="2">
    <location>
        <position position="222"/>
    </location>
    <ligand>
        <name>Zn(2+)</name>
        <dbReference type="ChEBI" id="CHEBI:29105"/>
        <label>2</label>
        <note>catalytic</note>
    </ligand>
</feature>
<feature type="binding site" evidence="2">
    <location>
        <position position="247"/>
    </location>
    <ligand>
        <name>Zn(2+)</name>
        <dbReference type="ChEBI" id="CHEBI:29105"/>
        <label>1</label>
        <note>catalytic</note>
    </ligand>
</feature>
<feature type="binding site" evidence="2">
    <location>
        <position position="320"/>
    </location>
    <ligand>
        <name>Zn(2+)</name>
        <dbReference type="ChEBI" id="CHEBI:29105"/>
        <label>2</label>
        <note>catalytic</note>
    </ligand>
</feature>
<feature type="site" description="Transition state stabilizer" evidence="2">
    <location>
        <position position="319"/>
    </location>
</feature>
<feature type="glycosylation site" description="N-linked (GlcNAc...) asparagine" evidence="4">
    <location>
        <position position="53"/>
    </location>
</feature>
<feature type="glycosylation site" description="N-linked (GlcNAc...) asparagine" evidence="4">
    <location>
        <position position="116"/>
    </location>
</feature>
<feature type="glycosylation site" description="N-linked (GlcNAc...) asparagine" evidence="4">
    <location>
        <position position="119"/>
    </location>
</feature>
<feature type="glycosylation site" description="N-linked (GlcNAc...) asparagine" evidence="4">
    <location>
        <position position="238"/>
    </location>
</feature>
<feature type="glycosylation site" description="N-linked (GlcNAc...) asparagine" evidence="4">
    <location>
        <position position="797"/>
    </location>
</feature>
<feature type="glycosylation site" description="N-linked (GlcNAc...) asparagine" evidence="4">
    <location>
        <position position="840"/>
    </location>
</feature>
<feature type="glycosylation site" description="N-linked (GlcNAc...) asparagine" evidence="4">
    <location>
        <position position="948"/>
    </location>
</feature>
<keyword id="KW-0325">Glycoprotein</keyword>
<keyword id="KW-0378">Hydrolase</keyword>
<keyword id="KW-0472">Membrane</keyword>
<keyword id="KW-0479">Metal-binding</keyword>
<keyword id="KW-0482">Metalloprotease</keyword>
<keyword id="KW-0645">Protease</keyword>
<keyword id="KW-0812">Transmembrane</keyword>
<keyword id="KW-1133">Transmembrane helix</keyword>
<keyword id="KW-0926">Vacuole</keyword>
<keyword id="KW-0862">Zinc</keyword>
<name>PFF1_AJEDR</name>
<dbReference type="EC" id="3.4.-.-" evidence="6"/>
<dbReference type="EMBL" id="EQ999973">
    <property type="protein sequence ID" value="EEQ83801.1"/>
    <property type="molecule type" value="Genomic_DNA"/>
</dbReference>
<dbReference type="RefSeq" id="XP_045271914.1">
    <property type="nucleotide sequence ID" value="XM_045416113.1"/>
</dbReference>
<dbReference type="SMR" id="C5G8H4"/>
<dbReference type="STRING" id="559297.C5G8H4"/>
<dbReference type="GeneID" id="69023339"/>
<dbReference type="VEuPathDB" id="FungiDB:BDCG_00606"/>
<dbReference type="eggNOG" id="KOG2194">
    <property type="taxonomic scope" value="Eukaryota"/>
</dbReference>
<dbReference type="HOGENOM" id="CLU_006412_1_0_1"/>
<dbReference type="OMA" id="FCHTFVN"/>
<dbReference type="GO" id="GO:0005774">
    <property type="term" value="C:vacuolar membrane"/>
    <property type="evidence" value="ECO:0007669"/>
    <property type="project" value="UniProtKB-SubCell"/>
</dbReference>
<dbReference type="GO" id="GO:0046872">
    <property type="term" value="F:metal ion binding"/>
    <property type="evidence" value="ECO:0007669"/>
    <property type="project" value="UniProtKB-KW"/>
</dbReference>
<dbReference type="GO" id="GO:0008235">
    <property type="term" value="F:metalloexopeptidase activity"/>
    <property type="evidence" value="ECO:0007669"/>
    <property type="project" value="InterPro"/>
</dbReference>
<dbReference type="GO" id="GO:0006508">
    <property type="term" value="P:proteolysis"/>
    <property type="evidence" value="ECO:0007669"/>
    <property type="project" value="UniProtKB-KW"/>
</dbReference>
<dbReference type="CDD" id="cd03875">
    <property type="entry name" value="M28_Fxna_like"/>
    <property type="match status" value="1"/>
</dbReference>
<dbReference type="FunFam" id="3.40.630.10:FF:000057">
    <property type="entry name" value="Vacuolar membrane protease"/>
    <property type="match status" value="1"/>
</dbReference>
<dbReference type="Gene3D" id="3.40.630.10">
    <property type="entry name" value="Zn peptidases"/>
    <property type="match status" value="1"/>
</dbReference>
<dbReference type="InterPro" id="IPR048024">
    <property type="entry name" value="Fxna-like_M28_dom"/>
</dbReference>
<dbReference type="InterPro" id="IPR045175">
    <property type="entry name" value="M28_fam"/>
</dbReference>
<dbReference type="InterPro" id="IPR007484">
    <property type="entry name" value="Peptidase_M28"/>
</dbReference>
<dbReference type="InterPro" id="IPR053975">
    <property type="entry name" value="PFF1_C"/>
</dbReference>
<dbReference type="InterPro" id="IPR053976">
    <property type="entry name" value="PFF1_TM"/>
</dbReference>
<dbReference type="PANTHER" id="PTHR12147">
    <property type="entry name" value="METALLOPEPTIDASE M28 FAMILY MEMBER"/>
    <property type="match status" value="1"/>
</dbReference>
<dbReference type="PANTHER" id="PTHR12147:SF58">
    <property type="entry name" value="VACUOLAR MEMBRANE PROTEASE"/>
    <property type="match status" value="1"/>
</dbReference>
<dbReference type="Pfam" id="PF04389">
    <property type="entry name" value="Peptidase_M28"/>
    <property type="match status" value="1"/>
</dbReference>
<dbReference type="Pfam" id="PF22250">
    <property type="entry name" value="PFF1_C"/>
    <property type="match status" value="1"/>
</dbReference>
<dbReference type="Pfam" id="PF22251">
    <property type="entry name" value="PFF1_TM"/>
    <property type="match status" value="1"/>
</dbReference>
<dbReference type="SUPFAM" id="SSF53187">
    <property type="entry name" value="Zn-dependent exopeptidases"/>
    <property type="match status" value="1"/>
</dbReference>
<evidence type="ECO:0000250" key="1">
    <source>
        <dbReference type="UniProtKB" id="P38244"/>
    </source>
</evidence>
<evidence type="ECO:0000250" key="2">
    <source>
        <dbReference type="UniProtKB" id="P80561"/>
    </source>
</evidence>
<evidence type="ECO:0000255" key="3"/>
<evidence type="ECO:0000255" key="4">
    <source>
        <dbReference type="PROSITE-ProRule" id="PRU00498"/>
    </source>
</evidence>
<evidence type="ECO:0000256" key="5">
    <source>
        <dbReference type="SAM" id="MobiDB-lite"/>
    </source>
</evidence>
<evidence type="ECO:0000305" key="6"/>